<reference key="1">
    <citation type="journal article" date="2000" name="Nature">
        <title>Sequence and analysis of chromosome 3 of the plant Arabidopsis thaliana.</title>
        <authorList>
            <person name="Salanoubat M."/>
            <person name="Lemcke K."/>
            <person name="Rieger M."/>
            <person name="Ansorge W."/>
            <person name="Unseld M."/>
            <person name="Fartmann B."/>
            <person name="Valle G."/>
            <person name="Bloecker H."/>
            <person name="Perez-Alonso M."/>
            <person name="Obermaier B."/>
            <person name="Delseny M."/>
            <person name="Boutry M."/>
            <person name="Grivell L.A."/>
            <person name="Mache R."/>
            <person name="Puigdomenech P."/>
            <person name="De Simone V."/>
            <person name="Choisne N."/>
            <person name="Artiguenave F."/>
            <person name="Robert C."/>
            <person name="Brottier P."/>
            <person name="Wincker P."/>
            <person name="Cattolico L."/>
            <person name="Weissenbach J."/>
            <person name="Saurin W."/>
            <person name="Quetier F."/>
            <person name="Schaefer M."/>
            <person name="Mueller-Auer S."/>
            <person name="Gabel C."/>
            <person name="Fuchs M."/>
            <person name="Benes V."/>
            <person name="Wurmbach E."/>
            <person name="Drzonek H."/>
            <person name="Erfle H."/>
            <person name="Jordan N."/>
            <person name="Bangert S."/>
            <person name="Wiedelmann R."/>
            <person name="Kranz H."/>
            <person name="Voss H."/>
            <person name="Holland R."/>
            <person name="Brandt P."/>
            <person name="Nyakatura G."/>
            <person name="Vezzi A."/>
            <person name="D'Angelo M."/>
            <person name="Pallavicini A."/>
            <person name="Toppo S."/>
            <person name="Simionati B."/>
            <person name="Conrad A."/>
            <person name="Hornischer K."/>
            <person name="Kauer G."/>
            <person name="Loehnert T.-H."/>
            <person name="Nordsiek G."/>
            <person name="Reichelt J."/>
            <person name="Scharfe M."/>
            <person name="Schoen O."/>
            <person name="Bargues M."/>
            <person name="Terol J."/>
            <person name="Climent J."/>
            <person name="Navarro P."/>
            <person name="Collado C."/>
            <person name="Perez-Perez A."/>
            <person name="Ottenwaelder B."/>
            <person name="Duchemin D."/>
            <person name="Cooke R."/>
            <person name="Laudie M."/>
            <person name="Berger-Llauro C."/>
            <person name="Purnelle B."/>
            <person name="Masuy D."/>
            <person name="de Haan M."/>
            <person name="Maarse A.C."/>
            <person name="Alcaraz J.-P."/>
            <person name="Cottet A."/>
            <person name="Casacuberta E."/>
            <person name="Monfort A."/>
            <person name="Argiriou A."/>
            <person name="Flores M."/>
            <person name="Liguori R."/>
            <person name="Vitale D."/>
            <person name="Mannhaupt G."/>
            <person name="Haase D."/>
            <person name="Schoof H."/>
            <person name="Rudd S."/>
            <person name="Zaccaria P."/>
            <person name="Mewes H.-W."/>
            <person name="Mayer K.F.X."/>
            <person name="Kaul S."/>
            <person name="Town C.D."/>
            <person name="Koo H.L."/>
            <person name="Tallon L.J."/>
            <person name="Jenkins J."/>
            <person name="Rooney T."/>
            <person name="Rizzo M."/>
            <person name="Walts A."/>
            <person name="Utterback T."/>
            <person name="Fujii C.Y."/>
            <person name="Shea T.P."/>
            <person name="Creasy T.H."/>
            <person name="Haas B."/>
            <person name="Maiti R."/>
            <person name="Wu D."/>
            <person name="Peterson J."/>
            <person name="Van Aken S."/>
            <person name="Pai G."/>
            <person name="Militscher J."/>
            <person name="Sellers P."/>
            <person name="Gill J.E."/>
            <person name="Feldblyum T.V."/>
            <person name="Preuss D."/>
            <person name="Lin X."/>
            <person name="Nierman W.C."/>
            <person name="Salzberg S.L."/>
            <person name="White O."/>
            <person name="Venter J.C."/>
            <person name="Fraser C.M."/>
            <person name="Kaneko T."/>
            <person name="Nakamura Y."/>
            <person name="Sato S."/>
            <person name="Kato T."/>
            <person name="Asamizu E."/>
            <person name="Sasamoto S."/>
            <person name="Kimura T."/>
            <person name="Idesawa K."/>
            <person name="Kawashima K."/>
            <person name="Kishida Y."/>
            <person name="Kiyokawa C."/>
            <person name="Kohara M."/>
            <person name="Matsumoto M."/>
            <person name="Matsuno A."/>
            <person name="Muraki A."/>
            <person name="Nakayama S."/>
            <person name="Nakazaki N."/>
            <person name="Shinpo S."/>
            <person name="Takeuchi C."/>
            <person name="Wada T."/>
            <person name="Watanabe A."/>
            <person name="Yamada M."/>
            <person name="Yasuda M."/>
            <person name="Tabata S."/>
        </authorList>
    </citation>
    <scope>NUCLEOTIDE SEQUENCE [LARGE SCALE GENOMIC DNA]</scope>
    <source>
        <strain>cv. Columbia</strain>
    </source>
</reference>
<reference key="2">
    <citation type="journal article" date="2017" name="Plant J.">
        <title>Araport11: a complete reannotation of the Arabidopsis thaliana reference genome.</title>
        <authorList>
            <person name="Cheng C.Y."/>
            <person name="Krishnakumar V."/>
            <person name="Chan A.P."/>
            <person name="Thibaud-Nissen F."/>
            <person name="Schobel S."/>
            <person name="Town C.D."/>
        </authorList>
    </citation>
    <scope>GENOME REANNOTATION</scope>
    <source>
        <strain>cv. Columbia</strain>
    </source>
</reference>
<reference key="3">
    <citation type="journal article" date="2008" name="Trends Plant Sci.">
        <title>The plant B3 superfamily.</title>
        <authorList>
            <person name="Swaminathan K."/>
            <person name="Peterson K."/>
            <person name="Jack T."/>
        </authorList>
    </citation>
    <scope>GENE FAMILY</scope>
</reference>
<organism>
    <name type="scientific">Arabidopsis thaliana</name>
    <name type="common">Mouse-ear cress</name>
    <dbReference type="NCBI Taxonomy" id="3702"/>
    <lineage>
        <taxon>Eukaryota</taxon>
        <taxon>Viridiplantae</taxon>
        <taxon>Streptophyta</taxon>
        <taxon>Embryophyta</taxon>
        <taxon>Tracheophyta</taxon>
        <taxon>Spermatophyta</taxon>
        <taxon>Magnoliopsida</taxon>
        <taxon>eudicotyledons</taxon>
        <taxon>Gunneridae</taxon>
        <taxon>Pentapetalae</taxon>
        <taxon>rosids</taxon>
        <taxon>malvids</taxon>
        <taxon>Brassicales</taxon>
        <taxon>Brassicaceae</taxon>
        <taxon>Camelineae</taxon>
        <taxon>Arabidopsis</taxon>
    </lineage>
</organism>
<accession>Q9M8K2</accession>
<sequence>MWATKSRRCAVHTSSMASGDVLPRFFTVFLSHCSSESMVIPRSYYNLLPRPLPKTAILIGTGGRFWKVAMTSKQEQVYFEQGWGNFVADNQLKEGEFLTFVFDGHKSYEVSIYGRGDCKETRAVIQVEEISDDTEDDNVSLHSPSNVSLDSLSNDSHHSTSNVSLRSLSNDSLHGDAEIESDSEYSPENLPSASISVESVEVVNPTTSRQRSYKRKTIENPHLYLDDPNNVCFETCLKLRKFELLVHAQLVKDYGLIFSDNVDYIDGYGKLTAKTTKWADQRVCINKWQKICERNQFTENDSILCEILRNEDKVVYAIKIHIFRDAAAST</sequence>
<feature type="chain" id="PRO_0000375114" description="B3 domain-containing protein REM21">
    <location>
        <begin position="1"/>
        <end position="330"/>
    </location>
</feature>
<feature type="DNA-binding region" description="TF-B3" evidence="1">
    <location>
        <begin position="23"/>
        <end position="116"/>
    </location>
</feature>
<feature type="region of interest" description="Disordered" evidence="2">
    <location>
        <begin position="129"/>
        <end position="169"/>
    </location>
</feature>
<feature type="compositionally biased region" description="Acidic residues" evidence="2">
    <location>
        <begin position="129"/>
        <end position="138"/>
    </location>
</feature>
<feature type="compositionally biased region" description="Low complexity" evidence="2">
    <location>
        <begin position="142"/>
        <end position="162"/>
    </location>
</feature>
<proteinExistence type="inferred from homology"/>
<protein>
    <recommendedName>
        <fullName>B3 domain-containing protein REM21</fullName>
    </recommendedName>
    <alternativeName>
        <fullName>Protein REPRODUCTIVE MERISTEM 21</fullName>
    </alternativeName>
</protein>
<dbReference type="EMBL" id="AC018907">
    <property type="protein sequence ID" value="AAF30309.1"/>
    <property type="molecule type" value="Genomic_DNA"/>
</dbReference>
<dbReference type="EMBL" id="CP002686">
    <property type="protein sequence ID" value="AEE74354.1"/>
    <property type="molecule type" value="Genomic_DNA"/>
</dbReference>
<dbReference type="RefSeq" id="NP_187267.1">
    <molecule id="Q9M8K2-1"/>
    <property type="nucleotide sequence ID" value="NM_111491.1"/>
</dbReference>
<dbReference type="SMR" id="Q9M8K2"/>
<dbReference type="FunCoup" id="Q9M8K2">
    <property type="interactions" value="2"/>
</dbReference>
<dbReference type="STRING" id="3702.Q9M8K2"/>
<dbReference type="EnsemblPlants" id="AT3G06160.1">
    <molecule id="Q9M8K2-1"/>
    <property type="protein sequence ID" value="AT3G06160.1"/>
    <property type="gene ID" value="AT3G06160"/>
</dbReference>
<dbReference type="GeneID" id="819790"/>
<dbReference type="Gramene" id="AT3G06160.1">
    <molecule id="Q9M8K2-1"/>
    <property type="protein sequence ID" value="AT3G06160.1"/>
    <property type="gene ID" value="AT3G06160"/>
</dbReference>
<dbReference type="KEGG" id="ath:AT3G06160"/>
<dbReference type="Araport" id="AT3G06160"/>
<dbReference type="TAIR" id="AT3G06160"/>
<dbReference type="HOGENOM" id="CLU_048511_2_0_1"/>
<dbReference type="InParanoid" id="Q9M8K2"/>
<dbReference type="OMA" id="KANTHHA"/>
<dbReference type="PhylomeDB" id="Q9M8K2"/>
<dbReference type="PRO" id="PR:Q9M8K2"/>
<dbReference type="Proteomes" id="UP000006548">
    <property type="component" value="Chromosome 3"/>
</dbReference>
<dbReference type="ExpressionAtlas" id="Q9M8K2">
    <property type="expression patterns" value="baseline and differential"/>
</dbReference>
<dbReference type="GO" id="GO:0005634">
    <property type="term" value="C:nucleus"/>
    <property type="evidence" value="ECO:0007669"/>
    <property type="project" value="UniProtKB-SubCell"/>
</dbReference>
<dbReference type="GO" id="GO:0003677">
    <property type="term" value="F:DNA binding"/>
    <property type="evidence" value="ECO:0007669"/>
    <property type="project" value="UniProtKB-KW"/>
</dbReference>
<dbReference type="CDD" id="cd10017">
    <property type="entry name" value="B3_DNA"/>
    <property type="match status" value="1"/>
</dbReference>
<dbReference type="Gene3D" id="2.40.330.10">
    <property type="entry name" value="DNA-binding pseudobarrel domain"/>
    <property type="match status" value="1"/>
</dbReference>
<dbReference type="InterPro" id="IPR003340">
    <property type="entry name" value="B3_DNA-bd"/>
</dbReference>
<dbReference type="InterPro" id="IPR015300">
    <property type="entry name" value="DNA-bd_pseudobarrel_sf"/>
</dbReference>
<dbReference type="InterPro" id="IPR050655">
    <property type="entry name" value="Plant_B3_domain"/>
</dbReference>
<dbReference type="PANTHER" id="PTHR31920">
    <property type="entry name" value="B3 DOMAIN-CONTAINING"/>
    <property type="match status" value="1"/>
</dbReference>
<dbReference type="PANTHER" id="PTHR31920:SF54">
    <property type="entry name" value="B3 DOMAIN-CONTAINING PROTEIN REM21"/>
    <property type="match status" value="1"/>
</dbReference>
<dbReference type="Pfam" id="PF02362">
    <property type="entry name" value="B3"/>
    <property type="match status" value="1"/>
</dbReference>
<dbReference type="SMART" id="SM01019">
    <property type="entry name" value="B3"/>
    <property type="match status" value="2"/>
</dbReference>
<dbReference type="SUPFAM" id="SSF101936">
    <property type="entry name" value="DNA-binding pseudobarrel domain"/>
    <property type="match status" value="1"/>
</dbReference>
<dbReference type="PROSITE" id="PS50863">
    <property type="entry name" value="B3"/>
    <property type="match status" value="1"/>
</dbReference>
<evidence type="ECO:0000255" key="1">
    <source>
        <dbReference type="PROSITE-ProRule" id="PRU00326"/>
    </source>
</evidence>
<evidence type="ECO:0000256" key="2">
    <source>
        <dbReference type="SAM" id="MobiDB-lite"/>
    </source>
</evidence>
<keyword id="KW-0025">Alternative splicing</keyword>
<keyword id="KW-0238">DNA-binding</keyword>
<keyword id="KW-0539">Nucleus</keyword>
<keyword id="KW-1185">Reference proteome</keyword>
<keyword id="KW-0804">Transcription</keyword>
<keyword id="KW-0805">Transcription regulation</keyword>
<gene>
    <name type="primary">REM21</name>
    <name type="ordered locus">At3g06160</name>
    <name type="ORF">F28L1.10</name>
</gene>
<comment type="subcellular location">
    <subcellularLocation>
        <location evidence="1">Nucleus</location>
    </subcellularLocation>
</comment>
<comment type="alternative products">
    <event type="alternative splicing"/>
    <isoform>
        <id>Q9M8K2-1</id>
        <name>1</name>
        <sequence type="displayed"/>
    </isoform>
    <text>A number of isoforms are produced. According to EST sequences.</text>
</comment>
<name>REM21_ARATH</name>